<comment type="function">
    <text evidence="1">This protein is one of the early assembly proteins of the 50S ribosomal subunit, although it is not seen to bind rRNA by itself. It is important during the early stages of 50S assembly.</text>
</comment>
<comment type="subunit">
    <text evidence="1">Part of the 50S ribosomal subunit.</text>
</comment>
<comment type="similarity">
    <text evidence="1">Belongs to the universal ribosomal protein uL13 family.</text>
</comment>
<feature type="chain" id="PRO_1000166884" description="Large ribosomal subunit protein uL13">
    <location>
        <begin position="1"/>
        <end position="142"/>
    </location>
</feature>
<protein>
    <recommendedName>
        <fullName evidence="1">Large ribosomal subunit protein uL13</fullName>
    </recommendedName>
    <alternativeName>
        <fullName evidence="2">50S ribosomal protein L13</fullName>
    </alternativeName>
</protein>
<organism>
    <name type="scientific">Shewanella baltica (strain OS223)</name>
    <dbReference type="NCBI Taxonomy" id="407976"/>
    <lineage>
        <taxon>Bacteria</taxon>
        <taxon>Pseudomonadati</taxon>
        <taxon>Pseudomonadota</taxon>
        <taxon>Gammaproteobacteria</taxon>
        <taxon>Alteromonadales</taxon>
        <taxon>Shewanellaceae</taxon>
        <taxon>Shewanella</taxon>
    </lineage>
</organism>
<dbReference type="EMBL" id="CP001252">
    <property type="protein sequence ID" value="ACK45242.1"/>
    <property type="molecule type" value="Genomic_DNA"/>
</dbReference>
<dbReference type="RefSeq" id="WP_006083053.1">
    <property type="nucleotide sequence ID" value="NC_011663.1"/>
</dbReference>
<dbReference type="SMR" id="B8E9M7"/>
<dbReference type="GeneID" id="11771044"/>
<dbReference type="KEGG" id="sbp:Sbal223_0723"/>
<dbReference type="HOGENOM" id="CLU_082184_2_2_6"/>
<dbReference type="Proteomes" id="UP000002507">
    <property type="component" value="Chromosome"/>
</dbReference>
<dbReference type="GO" id="GO:0022625">
    <property type="term" value="C:cytosolic large ribosomal subunit"/>
    <property type="evidence" value="ECO:0007669"/>
    <property type="project" value="TreeGrafter"/>
</dbReference>
<dbReference type="GO" id="GO:0003729">
    <property type="term" value="F:mRNA binding"/>
    <property type="evidence" value="ECO:0007669"/>
    <property type="project" value="TreeGrafter"/>
</dbReference>
<dbReference type="GO" id="GO:0003735">
    <property type="term" value="F:structural constituent of ribosome"/>
    <property type="evidence" value="ECO:0007669"/>
    <property type="project" value="InterPro"/>
</dbReference>
<dbReference type="GO" id="GO:0017148">
    <property type="term" value="P:negative regulation of translation"/>
    <property type="evidence" value="ECO:0007669"/>
    <property type="project" value="TreeGrafter"/>
</dbReference>
<dbReference type="GO" id="GO:0006412">
    <property type="term" value="P:translation"/>
    <property type="evidence" value="ECO:0007669"/>
    <property type="project" value="UniProtKB-UniRule"/>
</dbReference>
<dbReference type="CDD" id="cd00392">
    <property type="entry name" value="Ribosomal_L13"/>
    <property type="match status" value="1"/>
</dbReference>
<dbReference type="FunFam" id="3.90.1180.10:FF:000001">
    <property type="entry name" value="50S ribosomal protein L13"/>
    <property type="match status" value="1"/>
</dbReference>
<dbReference type="Gene3D" id="3.90.1180.10">
    <property type="entry name" value="Ribosomal protein L13"/>
    <property type="match status" value="1"/>
</dbReference>
<dbReference type="HAMAP" id="MF_01366">
    <property type="entry name" value="Ribosomal_uL13"/>
    <property type="match status" value="1"/>
</dbReference>
<dbReference type="InterPro" id="IPR005822">
    <property type="entry name" value="Ribosomal_uL13"/>
</dbReference>
<dbReference type="InterPro" id="IPR005823">
    <property type="entry name" value="Ribosomal_uL13_bac-type"/>
</dbReference>
<dbReference type="InterPro" id="IPR023563">
    <property type="entry name" value="Ribosomal_uL13_CS"/>
</dbReference>
<dbReference type="InterPro" id="IPR036899">
    <property type="entry name" value="Ribosomal_uL13_sf"/>
</dbReference>
<dbReference type="NCBIfam" id="TIGR01066">
    <property type="entry name" value="rplM_bact"/>
    <property type="match status" value="1"/>
</dbReference>
<dbReference type="PANTHER" id="PTHR11545:SF2">
    <property type="entry name" value="LARGE RIBOSOMAL SUBUNIT PROTEIN UL13M"/>
    <property type="match status" value="1"/>
</dbReference>
<dbReference type="PANTHER" id="PTHR11545">
    <property type="entry name" value="RIBOSOMAL PROTEIN L13"/>
    <property type="match status" value="1"/>
</dbReference>
<dbReference type="Pfam" id="PF00572">
    <property type="entry name" value="Ribosomal_L13"/>
    <property type="match status" value="1"/>
</dbReference>
<dbReference type="PIRSF" id="PIRSF002181">
    <property type="entry name" value="Ribosomal_L13"/>
    <property type="match status" value="1"/>
</dbReference>
<dbReference type="SUPFAM" id="SSF52161">
    <property type="entry name" value="Ribosomal protein L13"/>
    <property type="match status" value="1"/>
</dbReference>
<dbReference type="PROSITE" id="PS00783">
    <property type="entry name" value="RIBOSOMAL_L13"/>
    <property type="match status" value="1"/>
</dbReference>
<keyword id="KW-0687">Ribonucleoprotein</keyword>
<keyword id="KW-0689">Ribosomal protein</keyword>
<proteinExistence type="inferred from homology"/>
<reference key="1">
    <citation type="submission" date="2008-12" db="EMBL/GenBank/DDBJ databases">
        <title>Complete sequence of chromosome of Shewanella baltica OS223.</title>
        <authorList>
            <consortium name="US DOE Joint Genome Institute"/>
            <person name="Lucas S."/>
            <person name="Copeland A."/>
            <person name="Lapidus A."/>
            <person name="Glavina del Rio T."/>
            <person name="Dalin E."/>
            <person name="Tice H."/>
            <person name="Bruce D."/>
            <person name="Goodwin L."/>
            <person name="Pitluck S."/>
            <person name="Chertkov O."/>
            <person name="Meincke L."/>
            <person name="Brettin T."/>
            <person name="Detter J.C."/>
            <person name="Han C."/>
            <person name="Kuske C.R."/>
            <person name="Larimer F."/>
            <person name="Land M."/>
            <person name="Hauser L."/>
            <person name="Kyrpides N."/>
            <person name="Ovchinnikova G."/>
            <person name="Brettar I."/>
            <person name="Rodrigues J."/>
            <person name="Konstantinidis K."/>
            <person name="Tiedje J."/>
        </authorList>
    </citation>
    <scope>NUCLEOTIDE SEQUENCE [LARGE SCALE GENOMIC DNA]</scope>
    <source>
        <strain>OS223</strain>
    </source>
</reference>
<accession>B8E9M7</accession>
<gene>
    <name evidence="1" type="primary">rplM</name>
    <name type="ordered locus">Sbal223_0723</name>
</gene>
<evidence type="ECO:0000255" key="1">
    <source>
        <dbReference type="HAMAP-Rule" id="MF_01366"/>
    </source>
</evidence>
<evidence type="ECO:0000305" key="2"/>
<sequence>MKTFTATPETVTRDWFVVDADGKTLGRIATEIATRLRGKHKPEYTPHVDTGDYIIVVNAEKVTVTGNKAKGKTYYSHSGFPGGIKQISFEKLQAQKPEMIIEKAVKGMLPKGPLGRAMFRKLKVYAGAEHNHTAQQPQVLDI</sequence>
<name>RL13_SHEB2</name>